<organism>
    <name type="scientific">Bos taurus</name>
    <name type="common">Bovine</name>
    <dbReference type="NCBI Taxonomy" id="9913"/>
    <lineage>
        <taxon>Eukaryota</taxon>
        <taxon>Metazoa</taxon>
        <taxon>Chordata</taxon>
        <taxon>Craniata</taxon>
        <taxon>Vertebrata</taxon>
        <taxon>Euteleostomi</taxon>
        <taxon>Mammalia</taxon>
        <taxon>Eutheria</taxon>
        <taxon>Laurasiatheria</taxon>
        <taxon>Artiodactyla</taxon>
        <taxon>Ruminantia</taxon>
        <taxon>Pecora</taxon>
        <taxon>Bovidae</taxon>
        <taxon>Bovinae</taxon>
        <taxon>Bos</taxon>
    </lineage>
</organism>
<dbReference type="EMBL" id="BC116100">
    <property type="protein sequence ID" value="AAI16101.1"/>
    <property type="molecule type" value="mRNA"/>
</dbReference>
<dbReference type="RefSeq" id="NP_001068953.1">
    <property type="nucleotide sequence ID" value="NM_001075485.1"/>
</dbReference>
<dbReference type="SMR" id="Q1JQA8"/>
<dbReference type="FunCoup" id="Q1JQA8">
    <property type="interactions" value="113"/>
</dbReference>
<dbReference type="STRING" id="9913.ENSBTAP00000023518"/>
<dbReference type="PaxDb" id="9913-ENSBTAP00000023518"/>
<dbReference type="GeneID" id="511013"/>
<dbReference type="KEGG" id="bta:511013"/>
<dbReference type="CTD" id="256586"/>
<dbReference type="VEuPathDB" id="HostDB:ENSBTAG00000017683"/>
<dbReference type="eggNOG" id="ENOG502S0XR">
    <property type="taxonomic scope" value="Eukaryota"/>
</dbReference>
<dbReference type="HOGENOM" id="CLU_079453_1_0_1"/>
<dbReference type="InParanoid" id="Q1JQA8"/>
<dbReference type="OMA" id="HRMDVQI"/>
<dbReference type="OrthoDB" id="2107166at2759"/>
<dbReference type="TreeFam" id="TF318444"/>
<dbReference type="Proteomes" id="UP000009136">
    <property type="component" value="Chromosome 10"/>
</dbReference>
<dbReference type="Bgee" id="ENSBTAG00000017683">
    <property type="expression patterns" value="Expressed in occipital lobe and 104 other cell types or tissues"/>
</dbReference>
<dbReference type="CDD" id="cd00118">
    <property type="entry name" value="LysM"/>
    <property type="match status" value="1"/>
</dbReference>
<dbReference type="Gene3D" id="3.10.350.10">
    <property type="entry name" value="LysM domain"/>
    <property type="match status" value="1"/>
</dbReference>
<dbReference type="InterPro" id="IPR045030">
    <property type="entry name" value="LYSM1-4"/>
</dbReference>
<dbReference type="InterPro" id="IPR018392">
    <property type="entry name" value="LysM_dom"/>
</dbReference>
<dbReference type="InterPro" id="IPR036779">
    <property type="entry name" value="LysM_dom_sf"/>
</dbReference>
<dbReference type="PANTHER" id="PTHR20932:SF4">
    <property type="entry name" value="AND PUTATIVE PEPTIDOGLYCAN-BINDING DOMAIN-CONTAINING PROTEIN 2-RELATED"/>
    <property type="match status" value="1"/>
</dbReference>
<dbReference type="PANTHER" id="PTHR20932">
    <property type="entry name" value="LYSM AND PUTATIVE PEPTIDOGLYCAN-BINDING DOMAIN-CONTAINING PROTEIN"/>
    <property type="match status" value="1"/>
</dbReference>
<dbReference type="Pfam" id="PF01476">
    <property type="entry name" value="LysM"/>
    <property type="match status" value="1"/>
</dbReference>
<dbReference type="SMART" id="SM00257">
    <property type="entry name" value="LysM"/>
    <property type="match status" value="1"/>
</dbReference>
<dbReference type="SUPFAM" id="SSF54106">
    <property type="entry name" value="LysM domain"/>
    <property type="match status" value="1"/>
</dbReference>
<dbReference type="PROSITE" id="PS51782">
    <property type="entry name" value="LYSM"/>
    <property type="match status" value="1"/>
</dbReference>
<name>LYSM2_BOVIN</name>
<keyword id="KW-0007">Acetylation</keyword>
<keyword id="KW-0597">Phosphoprotein</keyword>
<keyword id="KW-1185">Reference proteome</keyword>
<reference key="1">
    <citation type="submission" date="2006-05" db="EMBL/GenBank/DDBJ databases">
        <authorList>
            <consortium name="NIH - Mammalian Gene Collection (MGC) project"/>
        </authorList>
    </citation>
    <scope>NUCLEOTIDE SEQUENCE [LARGE SCALE MRNA]</scope>
    <source>
        <strain>Hereford</strain>
        <tissue>Fetal ascending colon</tissue>
    </source>
</reference>
<accession>Q1JQA8</accession>
<sequence>MADSSPAPSLRAGGPREPRPSAPSPPPPHSRLGSEAEEAELSLSLARTKTRSYGSTASVRAPLGAGVIERHVEHRVRAGDTLQGIALKYGVSMEQIKRANKLFTNDCIFLKKTLNIPVISEKPLLFNGLNSVDSPENETVDSFSHEEELVAAGEDVSPLSPQELDVQPMQPEEVSARDFLQRLDLQIKLSTQAAKKLKGESRDEEGLYTASLYHS</sequence>
<protein>
    <recommendedName>
        <fullName>LysM and putative peptidoglycan-binding domain-containing protein 2</fullName>
    </recommendedName>
</protein>
<feature type="initiator methionine" description="Removed" evidence="1">
    <location>
        <position position="1"/>
    </location>
</feature>
<feature type="chain" id="PRO_0000248001" description="LysM and putative peptidoglycan-binding domain-containing protein 2">
    <location>
        <begin position="2"/>
        <end position="215"/>
    </location>
</feature>
<feature type="domain" description="LysM" evidence="2">
    <location>
        <begin position="72"/>
        <end position="116"/>
    </location>
</feature>
<feature type="region of interest" description="Disordered" evidence="3">
    <location>
        <begin position="1"/>
        <end position="40"/>
    </location>
</feature>
<feature type="region of interest" description="Disordered" evidence="3">
    <location>
        <begin position="194"/>
        <end position="215"/>
    </location>
</feature>
<feature type="compositionally biased region" description="Pro residues" evidence="3">
    <location>
        <begin position="20"/>
        <end position="29"/>
    </location>
</feature>
<feature type="modified residue" description="N-acetylalanine" evidence="1">
    <location>
        <position position="2"/>
    </location>
</feature>
<feature type="modified residue" description="Phosphoserine" evidence="1">
    <location>
        <position position="5"/>
    </location>
</feature>
<feature type="modified residue" description="Phosphoserine" evidence="1">
    <location>
        <position position="24"/>
    </location>
</feature>
<feature type="modified residue" description="Phosphoserine" evidence="1">
    <location>
        <position position="34"/>
    </location>
</feature>
<feature type="modified residue" description="Phosphoserine" evidence="1">
    <location>
        <position position="58"/>
    </location>
</feature>
<proteinExistence type="evidence at transcript level"/>
<gene>
    <name type="primary">LYSMD2</name>
</gene>
<evidence type="ECO:0000250" key="1">
    <source>
        <dbReference type="UniProtKB" id="Q8IV50"/>
    </source>
</evidence>
<evidence type="ECO:0000255" key="2">
    <source>
        <dbReference type="PROSITE-ProRule" id="PRU01118"/>
    </source>
</evidence>
<evidence type="ECO:0000256" key="3">
    <source>
        <dbReference type="SAM" id="MobiDB-lite"/>
    </source>
</evidence>